<comment type="catalytic activity">
    <reaction>
        <text>an acyl phosphate + H2O = a carboxylate + phosphate + H(+)</text>
        <dbReference type="Rhea" id="RHEA:14965"/>
        <dbReference type="ChEBI" id="CHEBI:15377"/>
        <dbReference type="ChEBI" id="CHEBI:15378"/>
        <dbReference type="ChEBI" id="CHEBI:29067"/>
        <dbReference type="ChEBI" id="CHEBI:43474"/>
        <dbReference type="ChEBI" id="CHEBI:59918"/>
        <dbReference type="EC" id="3.6.1.7"/>
    </reaction>
</comment>
<comment type="similarity">
    <text evidence="2">Belongs to the acylphosphatase family.</text>
</comment>
<accession>Q5E4P9</accession>
<feature type="chain" id="PRO_0000326841" description="Acylphosphatase">
    <location>
        <begin position="1"/>
        <end position="90"/>
    </location>
</feature>
<feature type="domain" description="Acylphosphatase-like" evidence="1">
    <location>
        <begin position="5"/>
        <end position="90"/>
    </location>
</feature>
<feature type="active site" evidence="1">
    <location>
        <position position="20"/>
    </location>
</feature>
<feature type="active site" evidence="1">
    <location>
        <position position="38"/>
    </location>
</feature>
<evidence type="ECO:0000255" key="1">
    <source>
        <dbReference type="PROSITE-ProRule" id="PRU00520"/>
    </source>
</evidence>
<evidence type="ECO:0000305" key="2"/>
<organism>
    <name type="scientific">Aliivibrio fischeri (strain ATCC 700601 / ES114)</name>
    <name type="common">Vibrio fischeri</name>
    <dbReference type="NCBI Taxonomy" id="312309"/>
    <lineage>
        <taxon>Bacteria</taxon>
        <taxon>Pseudomonadati</taxon>
        <taxon>Pseudomonadota</taxon>
        <taxon>Gammaproteobacteria</taxon>
        <taxon>Vibrionales</taxon>
        <taxon>Vibrionaceae</taxon>
        <taxon>Aliivibrio</taxon>
    </lineage>
</organism>
<keyword id="KW-0378">Hydrolase</keyword>
<keyword id="KW-1185">Reference proteome</keyword>
<dbReference type="EC" id="3.6.1.7"/>
<dbReference type="EMBL" id="CP000020">
    <property type="protein sequence ID" value="AAW85997.1"/>
    <property type="molecule type" value="Genomic_DNA"/>
</dbReference>
<dbReference type="RefSeq" id="WP_011262082.1">
    <property type="nucleotide sequence ID" value="NC_006840.2"/>
</dbReference>
<dbReference type="RefSeq" id="YP_204885.1">
    <property type="nucleotide sequence ID" value="NC_006840.2"/>
</dbReference>
<dbReference type="SMR" id="Q5E4P9"/>
<dbReference type="STRING" id="312309.VF_1502"/>
<dbReference type="EnsemblBacteria" id="AAW85997">
    <property type="protein sequence ID" value="AAW85997"/>
    <property type="gene ID" value="VF_1502"/>
</dbReference>
<dbReference type="GeneID" id="54164175"/>
<dbReference type="KEGG" id="vfi:VF_1502"/>
<dbReference type="PATRIC" id="fig|312309.11.peg.1519"/>
<dbReference type="eggNOG" id="COG1254">
    <property type="taxonomic scope" value="Bacteria"/>
</dbReference>
<dbReference type="HOGENOM" id="CLU_141932_1_2_6"/>
<dbReference type="OrthoDB" id="5295388at2"/>
<dbReference type="Proteomes" id="UP000000537">
    <property type="component" value="Chromosome I"/>
</dbReference>
<dbReference type="GO" id="GO:0003998">
    <property type="term" value="F:acylphosphatase activity"/>
    <property type="evidence" value="ECO:0007669"/>
    <property type="project" value="UniProtKB-EC"/>
</dbReference>
<dbReference type="Gene3D" id="3.30.70.100">
    <property type="match status" value="1"/>
</dbReference>
<dbReference type="InterPro" id="IPR020456">
    <property type="entry name" value="Acylphosphatase"/>
</dbReference>
<dbReference type="InterPro" id="IPR001792">
    <property type="entry name" value="Acylphosphatase-like_dom"/>
</dbReference>
<dbReference type="InterPro" id="IPR036046">
    <property type="entry name" value="Acylphosphatase-like_dom_sf"/>
</dbReference>
<dbReference type="InterPro" id="IPR017968">
    <property type="entry name" value="Acylphosphatase_CS"/>
</dbReference>
<dbReference type="NCBIfam" id="NF011000">
    <property type="entry name" value="PRK14426.1"/>
    <property type="match status" value="1"/>
</dbReference>
<dbReference type="NCBIfam" id="NF011022">
    <property type="entry name" value="PRK14451.1"/>
    <property type="match status" value="1"/>
</dbReference>
<dbReference type="PANTHER" id="PTHR47268">
    <property type="entry name" value="ACYLPHOSPHATASE"/>
    <property type="match status" value="1"/>
</dbReference>
<dbReference type="PANTHER" id="PTHR47268:SF4">
    <property type="entry name" value="ACYLPHOSPHATASE"/>
    <property type="match status" value="1"/>
</dbReference>
<dbReference type="Pfam" id="PF00708">
    <property type="entry name" value="Acylphosphatase"/>
    <property type="match status" value="1"/>
</dbReference>
<dbReference type="SUPFAM" id="SSF54975">
    <property type="entry name" value="Acylphosphatase/BLUF domain-like"/>
    <property type="match status" value="1"/>
</dbReference>
<dbReference type="PROSITE" id="PS00151">
    <property type="entry name" value="ACYLPHOSPHATASE_2"/>
    <property type="match status" value="1"/>
</dbReference>
<dbReference type="PROSITE" id="PS51160">
    <property type="entry name" value="ACYLPHOSPHATASE_3"/>
    <property type="match status" value="1"/>
</dbReference>
<reference key="1">
    <citation type="journal article" date="2005" name="Proc. Natl. Acad. Sci. U.S.A.">
        <title>Complete genome sequence of Vibrio fischeri: a symbiotic bacterium with pathogenic congeners.</title>
        <authorList>
            <person name="Ruby E.G."/>
            <person name="Urbanowski M."/>
            <person name="Campbell J."/>
            <person name="Dunn A."/>
            <person name="Faini M."/>
            <person name="Gunsalus R."/>
            <person name="Lostroh P."/>
            <person name="Lupp C."/>
            <person name="McCann J."/>
            <person name="Millikan D."/>
            <person name="Schaefer A."/>
            <person name="Stabb E."/>
            <person name="Stevens A."/>
            <person name="Visick K."/>
            <person name="Whistler C."/>
            <person name="Greenberg E.P."/>
        </authorList>
    </citation>
    <scope>NUCLEOTIDE SEQUENCE [LARGE SCALE GENOMIC DNA]</scope>
    <source>
        <strain>ATCC 700601 / ES114</strain>
    </source>
</reference>
<name>ACYP_ALIF1</name>
<proteinExistence type="inferred from homology"/>
<gene>
    <name type="primary">acyP</name>
    <name type="ordered locus">VF_1502</name>
</gene>
<sequence length="90" mass="10409">MSQKSYLFNVKGKVQRVGFRFHTAHNALKLGLTGYARNQEDGSVEVLVCGSKDKINQFLEWLQVGPQLARVDSIKQEETQWQELTDFKMY</sequence>
<protein>
    <recommendedName>
        <fullName>Acylphosphatase</fullName>
        <ecNumber>3.6.1.7</ecNumber>
    </recommendedName>
    <alternativeName>
        <fullName>Acylphosphate phosphohydrolase</fullName>
    </alternativeName>
</protein>